<keyword id="KW-1185">Reference proteome</keyword>
<keyword id="KW-0687">Ribonucleoprotein</keyword>
<keyword id="KW-0689">Ribosomal protein</keyword>
<keyword id="KW-0694">RNA-binding</keyword>
<keyword id="KW-0699">rRNA-binding</keyword>
<organism>
    <name type="scientific">Geobacter sulfurreducens (strain ATCC 51573 / DSM 12127 / PCA)</name>
    <dbReference type="NCBI Taxonomy" id="243231"/>
    <lineage>
        <taxon>Bacteria</taxon>
        <taxon>Pseudomonadati</taxon>
        <taxon>Thermodesulfobacteriota</taxon>
        <taxon>Desulfuromonadia</taxon>
        <taxon>Geobacterales</taxon>
        <taxon>Geobacteraceae</taxon>
        <taxon>Geobacter</taxon>
    </lineage>
</organism>
<accession>Q748Y4</accession>
<reference key="1">
    <citation type="journal article" date="2003" name="Science">
        <title>Genome of Geobacter sulfurreducens: metal reduction in subsurface environments.</title>
        <authorList>
            <person name="Methe B.A."/>
            <person name="Nelson K.E."/>
            <person name="Eisen J.A."/>
            <person name="Paulsen I.T."/>
            <person name="Nelson W.C."/>
            <person name="Heidelberg J.F."/>
            <person name="Wu D."/>
            <person name="Wu M."/>
            <person name="Ward N.L."/>
            <person name="Beanan M.J."/>
            <person name="Dodson R.J."/>
            <person name="Madupu R."/>
            <person name="Brinkac L.M."/>
            <person name="Daugherty S.C."/>
            <person name="DeBoy R.T."/>
            <person name="Durkin A.S."/>
            <person name="Gwinn M.L."/>
            <person name="Kolonay J.F."/>
            <person name="Sullivan S.A."/>
            <person name="Haft D.H."/>
            <person name="Selengut J."/>
            <person name="Davidsen T.M."/>
            <person name="Zafar N."/>
            <person name="White O."/>
            <person name="Tran B."/>
            <person name="Romero C."/>
            <person name="Forberger H.A."/>
            <person name="Weidman J.F."/>
            <person name="Khouri H.M."/>
            <person name="Feldblyum T.V."/>
            <person name="Utterback T.R."/>
            <person name="Van Aken S.E."/>
            <person name="Lovley D.R."/>
            <person name="Fraser C.M."/>
        </authorList>
    </citation>
    <scope>NUCLEOTIDE SEQUENCE [LARGE SCALE GENOMIC DNA]</scope>
    <source>
        <strain>ATCC 51573 / DSM 12127 / PCA</strain>
    </source>
</reference>
<proteinExistence type="inferred from homology"/>
<evidence type="ECO:0000255" key="1">
    <source>
        <dbReference type="HAMAP-Rule" id="MF_00362"/>
    </source>
</evidence>
<evidence type="ECO:0000305" key="2"/>
<feature type="chain" id="PRO_0000154636" description="Large ribosomal subunit protein uL10">
    <location>
        <begin position="1"/>
        <end position="174"/>
    </location>
</feature>
<comment type="function">
    <text evidence="1">Forms part of the ribosomal stalk, playing a central role in the interaction of the ribosome with GTP-bound translation factors.</text>
</comment>
<comment type="subunit">
    <text evidence="1">Part of the ribosomal stalk of the 50S ribosomal subunit. The N-terminus interacts with L11 and the large rRNA to form the base of the stalk. The C-terminus forms an elongated spine to which L12 dimers bind in a sequential fashion forming a multimeric L10(L12)X complex.</text>
</comment>
<comment type="similarity">
    <text evidence="1">Belongs to the universal ribosomal protein uL10 family.</text>
</comment>
<sequence length="174" mass="18731">MNKETKQQQVAELHDKLQRAKAVFLADFRGMNVEQATTLRNELRSAAVEYKVVKNTLLELASRDTDKESLSQHFAGPTAIALSYDDPVSAAKVLSKFAKTQPNTFKLKAGVLTGKAISVADIQSLADLPSREVLIAKLLGTINAPVANFVGVLAAVPGSFVRALNAIKVQKEGN</sequence>
<name>RL10_GEOSL</name>
<dbReference type="EMBL" id="AE017180">
    <property type="protein sequence ID" value="AAR36257.1"/>
    <property type="molecule type" value="Genomic_DNA"/>
</dbReference>
<dbReference type="RefSeq" id="NP_953907.1">
    <property type="nucleotide sequence ID" value="NC_002939.5"/>
</dbReference>
<dbReference type="RefSeq" id="WP_010943495.1">
    <property type="nucleotide sequence ID" value="NC_002939.5"/>
</dbReference>
<dbReference type="SMR" id="Q748Y4"/>
<dbReference type="FunCoup" id="Q748Y4">
    <property type="interactions" value="607"/>
</dbReference>
<dbReference type="STRING" id="243231.GSU2865"/>
<dbReference type="EnsemblBacteria" id="AAR36257">
    <property type="protein sequence ID" value="AAR36257"/>
    <property type="gene ID" value="GSU2865"/>
</dbReference>
<dbReference type="KEGG" id="gsu:GSU2865"/>
<dbReference type="PATRIC" id="fig|243231.5.peg.2893"/>
<dbReference type="eggNOG" id="COG0244">
    <property type="taxonomic scope" value="Bacteria"/>
</dbReference>
<dbReference type="HOGENOM" id="CLU_092227_0_0_7"/>
<dbReference type="InParanoid" id="Q748Y4"/>
<dbReference type="OrthoDB" id="3186107at2"/>
<dbReference type="Proteomes" id="UP000000577">
    <property type="component" value="Chromosome"/>
</dbReference>
<dbReference type="GO" id="GO:0022625">
    <property type="term" value="C:cytosolic large ribosomal subunit"/>
    <property type="evidence" value="ECO:0000318"/>
    <property type="project" value="GO_Central"/>
</dbReference>
<dbReference type="GO" id="GO:0070180">
    <property type="term" value="F:large ribosomal subunit rRNA binding"/>
    <property type="evidence" value="ECO:0007669"/>
    <property type="project" value="UniProtKB-UniRule"/>
</dbReference>
<dbReference type="GO" id="GO:0003735">
    <property type="term" value="F:structural constituent of ribosome"/>
    <property type="evidence" value="ECO:0000318"/>
    <property type="project" value="GO_Central"/>
</dbReference>
<dbReference type="GO" id="GO:0006412">
    <property type="term" value="P:translation"/>
    <property type="evidence" value="ECO:0000318"/>
    <property type="project" value="GO_Central"/>
</dbReference>
<dbReference type="CDD" id="cd05797">
    <property type="entry name" value="Ribosomal_L10"/>
    <property type="match status" value="1"/>
</dbReference>
<dbReference type="Gene3D" id="3.30.70.1730">
    <property type="match status" value="1"/>
</dbReference>
<dbReference type="Gene3D" id="6.10.250.290">
    <property type="match status" value="1"/>
</dbReference>
<dbReference type="HAMAP" id="MF_00362">
    <property type="entry name" value="Ribosomal_uL10"/>
    <property type="match status" value="1"/>
</dbReference>
<dbReference type="InterPro" id="IPR001790">
    <property type="entry name" value="Ribosomal_uL10"/>
</dbReference>
<dbReference type="InterPro" id="IPR043141">
    <property type="entry name" value="Ribosomal_uL10-like_sf"/>
</dbReference>
<dbReference type="InterPro" id="IPR022973">
    <property type="entry name" value="Ribosomal_uL10_bac"/>
</dbReference>
<dbReference type="InterPro" id="IPR047865">
    <property type="entry name" value="Ribosomal_uL10_bac_type"/>
</dbReference>
<dbReference type="InterPro" id="IPR002363">
    <property type="entry name" value="Ribosomal_uL10_CS_bac"/>
</dbReference>
<dbReference type="NCBIfam" id="NF000955">
    <property type="entry name" value="PRK00099.1-1"/>
    <property type="match status" value="1"/>
</dbReference>
<dbReference type="PANTHER" id="PTHR11560">
    <property type="entry name" value="39S RIBOSOMAL PROTEIN L10, MITOCHONDRIAL"/>
    <property type="match status" value="1"/>
</dbReference>
<dbReference type="Pfam" id="PF00466">
    <property type="entry name" value="Ribosomal_L10"/>
    <property type="match status" value="1"/>
</dbReference>
<dbReference type="SUPFAM" id="SSF160369">
    <property type="entry name" value="Ribosomal protein L10-like"/>
    <property type="match status" value="1"/>
</dbReference>
<dbReference type="PROSITE" id="PS01109">
    <property type="entry name" value="RIBOSOMAL_L10"/>
    <property type="match status" value="1"/>
</dbReference>
<protein>
    <recommendedName>
        <fullName evidence="1">Large ribosomal subunit protein uL10</fullName>
    </recommendedName>
    <alternativeName>
        <fullName evidence="2">50S ribosomal protein L10</fullName>
    </alternativeName>
</protein>
<gene>
    <name evidence="1" type="primary">rplJ</name>
    <name type="ordered locus">GSU2865</name>
</gene>